<evidence type="ECO:0000255" key="1">
    <source>
        <dbReference type="HAMAP-Rule" id="MF_01690"/>
    </source>
</evidence>
<comment type="function">
    <text evidence="1">Catalyzes the hydrolysis of N-succinyl-L,L-diaminopimelic acid (SDAP), forming succinate and LL-2,6-diaminopimelate (DAP), an intermediate involved in the bacterial biosynthesis of lysine and meso-diaminopimelic acid, an essential component of bacterial cell walls.</text>
</comment>
<comment type="catalytic activity">
    <reaction evidence="1">
        <text>N-succinyl-(2S,6S)-2,6-diaminopimelate + H2O = (2S,6S)-2,6-diaminopimelate + succinate</text>
        <dbReference type="Rhea" id="RHEA:22608"/>
        <dbReference type="ChEBI" id="CHEBI:15377"/>
        <dbReference type="ChEBI" id="CHEBI:30031"/>
        <dbReference type="ChEBI" id="CHEBI:57609"/>
        <dbReference type="ChEBI" id="CHEBI:58087"/>
        <dbReference type="EC" id="3.5.1.18"/>
    </reaction>
</comment>
<comment type="cofactor">
    <cofactor evidence="1">
        <name>Zn(2+)</name>
        <dbReference type="ChEBI" id="CHEBI:29105"/>
    </cofactor>
    <cofactor evidence="1">
        <name>Co(2+)</name>
        <dbReference type="ChEBI" id="CHEBI:48828"/>
    </cofactor>
    <text evidence="1">Binds 2 Zn(2+) or Co(2+) ions per subunit.</text>
</comment>
<comment type="pathway">
    <text evidence="1">Amino-acid biosynthesis; L-lysine biosynthesis via DAP pathway; LL-2,6-diaminopimelate from (S)-tetrahydrodipicolinate (succinylase route): step 3/3.</text>
</comment>
<comment type="subunit">
    <text evidence="1">Homodimer.</text>
</comment>
<comment type="similarity">
    <text evidence="1">Belongs to the peptidase M20A family. DapE subfamily.</text>
</comment>
<gene>
    <name evidence="1" type="primary">dapE</name>
    <name type="ordered locus">PXO_01145</name>
</gene>
<dbReference type="EC" id="3.5.1.18" evidence="1"/>
<dbReference type="EMBL" id="CP000967">
    <property type="protein sequence ID" value="ACD59546.1"/>
    <property type="molecule type" value="Genomic_DNA"/>
</dbReference>
<dbReference type="RefSeq" id="WP_012445172.1">
    <property type="nucleotide sequence ID" value="NC_010717.2"/>
</dbReference>
<dbReference type="SMR" id="B2SQY5"/>
<dbReference type="KEGG" id="xop:PXO_01145"/>
<dbReference type="eggNOG" id="COG0624">
    <property type="taxonomic scope" value="Bacteria"/>
</dbReference>
<dbReference type="HOGENOM" id="CLU_021802_4_0_6"/>
<dbReference type="UniPathway" id="UPA00034">
    <property type="reaction ID" value="UER00021"/>
</dbReference>
<dbReference type="Proteomes" id="UP000001740">
    <property type="component" value="Chromosome"/>
</dbReference>
<dbReference type="GO" id="GO:0008777">
    <property type="term" value="F:acetylornithine deacetylase activity"/>
    <property type="evidence" value="ECO:0007669"/>
    <property type="project" value="TreeGrafter"/>
</dbReference>
<dbReference type="GO" id="GO:0050897">
    <property type="term" value="F:cobalt ion binding"/>
    <property type="evidence" value="ECO:0007669"/>
    <property type="project" value="UniProtKB-UniRule"/>
</dbReference>
<dbReference type="GO" id="GO:0009014">
    <property type="term" value="F:succinyl-diaminopimelate desuccinylase activity"/>
    <property type="evidence" value="ECO:0007669"/>
    <property type="project" value="UniProtKB-UniRule"/>
</dbReference>
<dbReference type="GO" id="GO:0008270">
    <property type="term" value="F:zinc ion binding"/>
    <property type="evidence" value="ECO:0007669"/>
    <property type="project" value="UniProtKB-UniRule"/>
</dbReference>
<dbReference type="GO" id="GO:0019877">
    <property type="term" value="P:diaminopimelate biosynthetic process"/>
    <property type="evidence" value="ECO:0007669"/>
    <property type="project" value="UniProtKB-UniRule"/>
</dbReference>
<dbReference type="GO" id="GO:0006526">
    <property type="term" value="P:L-arginine biosynthetic process"/>
    <property type="evidence" value="ECO:0007669"/>
    <property type="project" value="TreeGrafter"/>
</dbReference>
<dbReference type="GO" id="GO:0009089">
    <property type="term" value="P:lysine biosynthetic process via diaminopimelate"/>
    <property type="evidence" value="ECO:0007669"/>
    <property type="project" value="UniProtKB-UniRule"/>
</dbReference>
<dbReference type="CDD" id="cd03891">
    <property type="entry name" value="M20_DapE_proteobac"/>
    <property type="match status" value="1"/>
</dbReference>
<dbReference type="FunFam" id="3.40.630.10:FF:000005">
    <property type="entry name" value="Succinyl-diaminopimelate desuccinylase"/>
    <property type="match status" value="1"/>
</dbReference>
<dbReference type="Gene3D" id="3.40.630.10">
    <property type="entry name" value="Zn peptidases"/>
    <property type="match status" value="2"/>
</dbReference>
<dbReference type="HAMAP" id="MF_01690">
    <property type="entry name" value="DapE"/>
    <property type="match status" value="1"/>
</dbReference>
<dbReference type="InterPro" id="IPR036264">
    <property type="entry name" value="Bact_exopeptidase_dim_dom"/>
</dbReference>
<dbReference type="InterPro" id="IPR005941">
    <property type="entry name" value="DapE_proteobac"/>
</dbReference>
<dbReference type="InterPro" id="IPR002933">
    <property type="entry name" value="Peptidase_M20"/>
</dbReference>
<dbReference type="InterPro" id="IPR011650">
    <property type="entry name" value="Peptidase_M20_dimer"/>
</dbReference>
<dbReference type="InterPro" id="IPR050072">
    <property type="entry name" value="Peptidase_M20A"/>
</dbReference>
<dbReference type="NCBIfam" id="TIGR01246">
    <property type="entry name" value="dapE_proteo"/>
    <property type="match status" value="1"/>
</dbReference>
<dbReference type="NCBIfam" id="NF009557">
    <property type="entry name" value="PRK13009.1"/>
    <property type="match status" value="1"/>
</dbReference>
<dbReference type="PANTHER" id="PTHR43808">
    <property type="entry name" value="ACETYLORNITHINE DEACETYLASE"/>
    <property type="match status" value="1"/>
</dbReference>
<dbReference type="PANTHER" id="PTHR43808:SF31">
    <property type="entry name" value="N-ACETYL-L-CITRULLINE DEACETYLASE"/>
    <property type="match status" value="1"/>
</dbReference>
<dbReference type="Pfam" id="PF07687">
    <property type="entry name" value="M20_dimer"/>
    <property type="match status" value="1"/>
</dbReference>
<dbReference type="Pfam" id="PF01546">
    <property type="entry name" value="Peptidase_M20"/>
    <property type="match status" value="1"/>
</dbReference>
<dbReference type="SUPFAM" id="SSF55031">
    <property type="entry name" value="Bacterial exopeptidase dimerisation domain"/>
    <property type="match status" value="1"/>
</dbReference>
<dbReference type="SUPFAM" id="SSF53187">
    <property type="entry name" value="Zn-dependent exopeptidases"/>
    <property type="match status" value="1"/>
</dbReference>
<keyword id="KW-0028">Amino-acid biosynthesis</keyword>
<keyword id="KW-0170">Cobalt</keyword>
<keyword id="KW-0220">Diaminopimelate biosynthesis</keyword>
<keyword id="KW-0378">Hydrolase</keyword>
<keyword id="KW-0457">Lysine biosynthesis</keyword>
<keyword id="KW-0479">Metal-binding</keyword>
<keyword id="KW-0862">Zinc</keyword>
<feature type="chain" id="PRO_0000375788" description="Succinyl-diaminopimelate desuccinylase">
    <location>
        <begin position="1"/>
        <end position="376"/>
    </location>
</feature>
<feature type="active site" evidence="1">
    <location>
        <position position="68"/>
    </location>
</feature>
<feature type="active site" description="Proton acceptor" evidence="1">
    <location>
        <position position="133"/>
    </location>
</feature>
<feature type="binding site" evidence="1">
    <location>
        <position position="66"/>
    </location>
    <ligand>
        <name>Zn(2+)</name>
        <dbReference type="ChEBI" id="CHEBI:29105"/>
        <label>1</label>
    </ligand>
</feature>
<feature type="binding site" evidence="1">
    <location>
        <position position="99"/>
    </location>
    <ligand>
        <name>Zn(2+)</name>
        <dbReference type="ChEBI" id="CHEBI:29105"/>
        <label>1</label>
    </ligand>
</feature>
<feature type="binding site" evidence="1">
    <location>
        <position position="99"/>
    </location>
    <ligand>
        <name>Zn(2+)</name>
        <dbReference type="ChEBI" id="CHEBI:29105"/>
        <label>2</label>
    </ligand>
</feature>
<feature type="binding site" evidence="1">
    <location>
        <position position="134"/>
    </location>
    <ligand>
        <name>Zn(2+)</name>
        <dbReference type="ChEBI" id="CHEBI:29105"/>
        <label>2</label>
    </ligand>
</feature>
<feature type="binding site" evidence="1">
    <location>
        <position position="162"/>
    </location>
    <ligand>
        <name>Zn(2+)</name>
        <dbReference type="ChEBI" id="CHEBI:29105"/>
        <label>1</label>
    </ligand>
</feature>
<feature type="binding site" evidence="1">
    <location>
        <position position="348"/>
    </location>
    <ligand>
        <name>Zn(2+)</name>
        <dbReference type="ChEBI" id="CHEBI:29105"/>
        <label>2</label>
    </ligand>
</feature>
<proteinExistence type="inferred from homology"/>
<name>DAPE_XANOP</name>
<protein>
    <recommendedName>
        <fullName evidence="1">Succinyl-diaminopimelate desuccinylase</fullName>
        <shortName evidence="1">SDAP desuccinylase</shortName>
        <ecNumber evidence="1">3.5.1.18</ecNumber>
    </recommendedName>
    <alternativeName>
        <fullName evidence="1">N-succinyl-LL-2,6-diaminoheptanedioate amidohydrolase</fullName>
    </alternativeName>
</protein>
<accession>B2SQY5</accession>
<sequence>MNDVLDLTCDLIARASVTPEDAGCQALLAGRLTAAGFACEHLRLGEVDNLWATHGSGAPVLVLLGHTDVVPPGPREAWTSDPFDPQIRDGVLYGRGVADMKGSVAAFVVAAEQFVAAHRAHAGTLAVLLTSDEEGDAIDGVRRVANLFRERGQAIDWCITGEPSSTERLGDLLRVGRRGSLSGTLTVKGVQGHVAYPHKARNPIHLAAPALAELVARQWDDGFESFPPTSLQVSNIHAGTGANNVIPGELQVAFNLRYTPHWDAPRLETEITALLDRHALDYALRWHRSGEPFYTPEGRLRSVAREVLGAFAGAPPEESTGGGTSDARFIAPLGAQCIEVGPVNASIHQVDEHVRVADLQALPALYRTLIERLLVE</sequence>
<organism>
    <name type="scientific">Xanthomonas oryzae pv. oryzae (strain PXO99A)</name>
    <dbReference type="NCBI Taxonomy" id="360094"/>
    <lineage>
        <taxon>Bacteria</taxon>
        <taxon>Pseudomonadati</taxon>
        <taxon>Pseudomonadota</taxon>
        <taxon>Gammaproteobacteria</taxon>
        <taxon>Lysobacterales</taxon>
        <taxon>Lysobacteraceae</taxon>
        <taxon>Xanthomonas</taxon>
    </lineage>
</organism>
<reference key="1">
    <citation type="journal article" date="2008" name="BMC Genomics">
        <title>Genome sequence and rapid evolution of the rice pathogen Xanthomonas oryzae pv. oryzae PXO99A.</title>
        <authorList>
            <person name="Salzberg S.L."/>
            <person name="Sommer D.D."/>
            <person name="Schatz M.C."/>
            <person name="Phillippy A.M."/>
            <person name="Rabinowicz P.D."/>
            <person name="Tsuge S."/>
            <person name="Furutani A."/>
            <person name="Ochiai H."/>
            <person name="Delcher A.L."/>
            <person name="Kelley D."/>
            <person name="Madupu R."/>
            <person name="Puiu D."/>
            <person name="Radune D."/>
            <person name="Shumway M."/>
            <person name="Trapnell C."/>
            <person name="Aparna G."/>
            <person name="Jha G."/>
            <person name="Pandey A."/>
            <person name="Patil P.B."/>
            <person name="Ishihara H."/>
            <person name="Meyer D.F."/>
            <person name="Szurek B."/>
            <person name="Verdier V."/>
            <person name="Koebnik R."/>
            <person name="Dow J.M."/>
            <person name="Ryan R.P."/>
            <person name="Hirata H."/>
            <person name="Tsuyumu S."/>
            <person name="Won Lee S."/>
            <person name="Seo Y.-S."/>
            <person name="Sriariyanum M."/>
            <person name="Ronald P.C."/>
            <person name="Sonti R.V."/>
            <person name="Van Sluys M.-A."/>
            <person name="Leach J.E."/>
            <person name="White F.F."/>
            <person name="Bogdanove A.J."/>
        </authorList>
    </citation>
    <scope>NUCLEOTIDE SEQUENCE [LARGE SCALE GENOMIC DNA]</scope>
    <source>
        <strain>PXO99A</strain>
    </source>
</reference>